<name>PIMT_XANP2</name>
<comment type="function">
    <text evidence="1">Catalyzes the methyl esterification of L-isoaspartyl residues in peptides and proteins that result from spontaneous decomposition of normal L-aspartyl and L-asparaginyl residues. It plays a role in the repair and/or degradation of damaged proteins.</text>
</comment>
<comment type="catalytic activity">
    <reaction evidence="1">
        <text>[protein]-L-isoaspartate + S-adenosyl-L-methionine = [protein]-L-isoaspartate alpha-methyl ester + S-adenosyl-L-homocysteine</text>
        <dbReference type="Rhea" id="RHEA:12705"/>
        <dbReference type="Rhea" id="RHEA-COMP:12143"/>
        <dbReference type="Rhea" id="RHEA-COMP:12144"/>
        <dbReference type="ChEBI" id="CHEBI:57856"/>
        <dbReference type="ChEBI" id="CHEBI:59789"/>
        <dbReference type="ChEBI" id="CHEBI:90596"/>
        <dbReference type="ChEBI" id="CHEBI:90598"/>
        <dbReference type="EC" id="2.1.1.77"/>
    </reaction>
</comment>
<comment type="subcellular location">
    <subcellularLocation>
        <location evidence="1">Cytoplasm</location>
    </subcellularLocation>
</comment>
<comment type="similarity">
    <text evidence="1">Belongs to the methyltransferase superfamily. L-isoaspartyl/D-aspartyl protein methyltransferase family.</text>
</comment>
<keyword id="KW-0963">Cytoplasm</keyword>
<keyword id="KW-0489">Methyltransferase</keyword>
<keyword id="KW-1185">Reference proteome</keyword>
<keyword id="KW-0949">S-adenosyl-L-methionine</keyword>
<keyword id="KW-0808">Transferase</keyword>
<evidence type="ECO:0000255" key="1">
    <source>
        <dbReference type="HAMAP-Rule" id="MF_00090"/>
    </source>
</evidence>
<reference key="1">
    <citation type="submission" date="2007-07" db="EMBL/GenBank/DDBJ databases">
        <title>Complete sequence of chromosome of Xanthobacter autotrophicus Py2.</title>
        <authorList>
            <consortium name="US DOE Joint Genome Institute"/>
            <person name="Copeland A."/>
            <person name="Lucas S."/>
            <person name="Lapidus A."/>
            <person name="Barry K."/>
            <person name="Glavina del Rio T."/>
            <person name="Hammon N."/>
            <person name="Israni S."/>
            <person name="Dalin E."/>
            <person name="Tice H."/>
            <person name="Pitluck S."/>
            <person name="Sims D."/>
            <person name="Brettin T."/>
            <person name="Bruce D."/>
            <person name="Detter J.C."/>
            <person name="Han C."/>
            <person name="Tapia R."/>
            <person name="Brainard J."/>
            <person name="Schmutz J."/>
            <person name="Larimer F."/>
            <person name="Land M."/>
            <person name="Hauser L."/>
            <person name="Kyrpides N."/>
            <person name="Kim E."/>
            <person name="Ensigns S.A."/>
            <person name="Richardson P."/>
        </authorList>
    </citation>
    <scope>NUCLEOTIDE SEQUENCE [LARGE SCALE GENOMIC DNA]</scope>
    <source>
        <strain>ATCC BAA-1158 / Py2</strain>
    </source>
</reference>
<feature type="chain" id="PRO_0000351950" description="Protein-L-isoaspartate O-methyltransferase">
    <location>
        <begin position="1"/>
        <end position="219"/>
    </location>
</feature>
<feature type="active site" evidence="1">
    <location>
        <position position="66"/>
    </location>
</feature>
<proteinExistence type="inferred from homology"/>
<protein>
    <recommendedName>
        <fullName evidence="1">Protein-L-isoaspartate O-methyltransferase</fullName>
        <ecNumber evidence="1">2.1.1.77</ecNumber>
    </recommendedName>
    <alternativeName>
        <fullName evidence="1">L-isoaspartyl protein carboxyl methyltransferase</fullName>
    </alternativeName>
    <alternativeName>
        <fullName evidence="1">Protein L-isoaspartyl methyltransferase</fullName>
    </alternativeName>
    <alternativeName>
        <fullName evidence="1">Protein-beta-aspartate methyltransferase</fullName>
        <shortName evidence="1">PIMT</shortName>
    </alternativeName>
</protein>
<dbReference type="EC" id="2.1.1.77" evidence="1"/>
<dbReference type="EMBL" id="CP000781">
    <property type="protein sequence ID" value="ABS69635.1"/>
    <property type="molecule type" value="Genomic_DNA"/>
</dbReference>
<dbReference type="SMR" id="A7INP1"/>
<dbReference type="STRING" id="78245.Xaut_4414"/>
<dbReference type="KEGG" id="xau:Xaut_4414"/>
<dbReference type="eggNOG" id="COG2518">
    <property type="taxonomic scope" value="Bacteria"/>
</dbReference>
<dbReference type="HOGENOM" id="CLU_055432_2_0_5"/>
<dbReference type="OrthoDB" id="9810066at2"/>
<dbReference type="PhylomeDB" id="A7INP1"/>
<dbReference type="Proteomes" id="UP000002417">
    <property type="component" value="Chromosome"/>
</dbReference>
<dbReference type="GO" id="GO:0005737">
    <property type="term" value="C:cytoplasm"/>
    <property type="evidence" value="ECO:0007669"/>
    <property type="project" value="UniProtKB-SubCell"/>
</dbReference>
<dbReference type="GO" id="GO:0004719">
    <property type="term" value="F:protein-L-isoaspartate (D-aspartate) O-methyltransferase activity"/>
    <property type="evidence" value="ECO:0007669"/>
    <property type="project" value="UniProtKB-UniRule"/>
</dbReference>
<dbReference type="GO" id="GO:0032259">
    <property type="term" value="P:methylation"/>
    <property type="evidence" value="ECO:0007669"/>
    <property type="project" value="UniProtKB-KW"/>
</dbReference>
<dbReference type="GO" id="GO:0036211">
    <property type="term" value="P:protein modification process"/>
    <property type="evidence" value="ECO:0007669"/>
    <property type="project" value="UniProtKB-UniRule"/>
</dbReference>
<dbReference type="GO" id="GO:0030091">
    <property type="term" value="P:protein repair"/>
    <property type="evidence" value="ECO:0007669"/>
    <property type="project" value="UniProtKB-UniRule"/>
</dbReference>
<dbReference type="CDD" id="cd02440">
    <property type="entry name" value="AdoMet_MTases"/>
    <property type="match status" value="1"/>
</dbReference>
<dbReference type="FunFam" id="3.40.50.150:FF:000010">
    <property type="entry name" value="Protein-L-isoaspartate O-methyltransferase"/>
    <property type="match status" value="1"/>
</dbReference>
<dbReference type="Gene3D" id="3.40.50.150">
    <property type="entry name" value="Vaccinia Virus protein VP39"/>
    <property type="match status" value="1"/>
</dbReference>
<dbReference type="HAMAP" id="MF_00090">
    <property type="entry name" value="PIMT"/>
    <property type="match status" value="1"/>
</dbReference>
<dbReference type="InterPro" id="IPR000682">
    <property type="entry name" value="PCMT"/>
</dbReference>
<dbReference type="InterPro" id="IPR029063">
    <property type="entry name" value="SAM-dependent_MTases_sf"/>
</dbReference>
<dbReference type="NCBIfam" id="TIGR00080">
    <property type="entry name" value="pimt"/>
    <property type="match status" value="1"/>
</dbReference>
<dbReference type="NCBIfam" id="NF001453">
    <property type="entry name" value="PRK00312.1"/>
    <property type="match status" value="1"/>
</dbReference>
<dbReference type="PANTHER" id="PTHR11579">
    <property type="entry name" value="PROTEIN-L-ISOASPARTATE O-METHYLTRANSFERASE"/>
    <property type="match status" value="1"/>
</dbReference>
<dbReference type="PANTHER" id="PTHR11579:SF0">
    <property type="entry name" value="PROTEIN-L-ISOASPARTATE(D-ASPARTATE) O-METHYLTRANSFERASE"/>
    <property type="match status" value="1"/>
</dbReference>
<dbReference type="Pfam" id="PF01135">
    <property type="entry name" value="PCMT"/>
    <property type="match status" value="1"/>
</dbReference>
<dbReference type="SUPFAM" id="SSF53335">
    <property type="entry name" value="S-adenosyl-L-methionine-dependent methyltransferases"/>
    <property type="match status" value="1"/>
</dbReference>
<accession>A7INP1</accession>
<gene>
    <name evidence="1" type="primary">pcm</name>
    <name type="ordered locus">Xaut_4414</name>
</gene>
<sequence length="219" mass="23549">MSTGESEGEQAERMAFILGLRQRGIRDVGVLRAMELVPRPLFVDPALRRHAYDDVALPIACGQTMSQPSLVAAMTEALSLTADHSVLEVGTGSGYHAAVLSHLAARVVTVDRYRSLVAEAQARFEVLGLRNVTAYVGDGTLGMPARAPFDRILVTAAAPDIPFALIDQLKFGGVIVMPLGAPEEIQTLVRYVKEQSGRTRTELMKVRFVPLIPGAAATL</sequence>
<organism>
    <name type="scientific">Xanthobacter autotrophicus (strain ATCC BAA-1158 / Py2)</name>
    <dbReference type="NCBI Taxonomy" id="78245"/>
    <lineage>
        <taxon>Bacteria</taxon>
        <taxon>Pseudomonadati</taxon>
        <taxon>Pseudomonadota</taxon>
        <taxon>Alphaproteobacteria</taxon>
        <taxon>Hyphomicrobiales</taxon>
        <taxon>Xanthobacteraceae</taxon>
        <taxon>Xanthobacter</taxon>
    </lineage>
</organism>